<dbReference type="EC" id="2.1.1.190" evidence="1"/>
<dbReference type="EMBL" id="CP000439">
    <property type="protein sequence ID" value="ABK89510.1"/>
    <property type="molecule type" value="Genomic_DNA"/>
</dbReference>
<dbReference type="RefSeq" id="WP_003038679.1">
    <property type="nucleotide sequence ID" value="NC_008601.1"/>
</dbReference>
<dbReference type="SMR" id="A0Q5J5"/>
<dbReference type="KEGG" id="ftn:FTN_0616"/>
<dbReference type="KEGG" id="ftx:AW25_1411"/>
<dbReference type="BioCyc" id="FTUL401614:G1G75-641-MONOMER"/>
<dbReference type="Proteomes" id="UP000000762">
    <property type="component" value="Chromosome"/>
</dbReference>
<dbReference type="GO" id="GO:0051539">
    <property type="term" value="F:4 iron, 4 sulfur cluster binding"/>
    <property type="evidence" value="ECO:0007669"/>
    <property type="project" value="UniProtKB-KW"/>
</dbReference>
<dbReference type="GO" id="GO:0005506">
    <property type="term" value="F:iron ion binding"/>
    <property type="evidence" value="ECO:0007669"/>
    <property type="project" value="UniProtKB-UniRule"/>
</dbReference>
<dbReference type="GO" id="GO:0003723">
    <property type="term" value="F:RNA binding"/>
    <property type="evidence" value="ECO:0007669"/>
    <property type="project" value="InterPro"/>
</dbReference>
<dbReference type="GO" id="GO:0070041">
    <property type="term" value="F:rRNA (uridine-C5-)-methyltransferase activity"/>
    <property type="evidence" value="ECO:0007669"/>
    <property type="project" value="UniProtKB-UniRule"/>
</dbReference>
<dbReference type="GO" id="GO:0070475">
    <property type="term" value="P:rRNA base methylation"/>
    <property type="evidence" value="ECO:0007669"/>
    <property type="project" value="TreeGrafter"/>
</dbReference>
<dbReference type="CDD" id="cd02440">
    <property type="entry name" value="AdoMet_MTases"/>
    <property type="match status" value="1"/>
</dbReference>
<dbReference type="FunFam" id="2.40.50.140:FF:000097">
    <property type="entry name" value="23S rRNA (uracil(1939)-C(5))-methyltransferase RlmD"/>
    <property type="match status" value="1"/>
</dbReference>
<dbReference type="Gene3D" id="2.40.50.1070">
    <property type="match status" value="1"/>
</dbReference>
<dbReference type="Gene3D" id="2.40.50.140">
    <property type="entry name" value="Nucleic acid-binding proteins"/>
    <property type="match status" value="1"/>
</dbReference>
<dbReference type="Gene3D" id="3.40.50.150">
    <property type="entry name" value="Vaccinia Virus protein VP39"/>
    <property type="match status" value="1"/>
</dbReference>
<dbReference type="HAMAP" id="MF_01010">
    <property type="entry name" value="23SrRNA_methyltr_RlmD"/>
    <property type="match status" value="1"/>
</dbReference>
<dbReference type="InterPro" id="IPR001566">
    <property type="entry name" value="23S_rRNA_MeTrfase_RlmD"/>
</dbReference>
<dbReference type="InterPro" id="IPR030390">
    <property type="entry name" value="MeTrfase_TrmA_AS"/>
</dbReference>
<dbReference type="InterPro" id="IPR030391">
    <property type="entry name" value="MeTrfase_TrmA_CS"/>
</dbReference>
<dbReference type="InterPro" id="IPR012340">
    <property type="entry name" value="NA-bd_OB-fold"/>
</dbReference>
<dbReference type="InterPro" id="IPR029063">
    <property type="entry name" value="SAM-dependent_MTases_sf"/>
</dbReference>
<dbReference type="InterPro" id="IPR002792">
    <property type="entry name" value="TRAM_dom"/>
</dbReference>
<dbReference type="InterPro" id="IPR010280">
    <property type="entry name" value="U5_MeTrfase_fam"/>
</dbReference>
<dbReference type="NCBIfam" id="NF009639">
    <property type="entry name" value="PRK13168.1"/>
    <property type="match status" value="1"/>
</dbReference>
<dbReference type="NCBIfam" id="TIGR00479">
    <property type="entry name" value="rumA"/>
    <property type="match status" value="1"/>
</dbReference>
<dbReference type="PANTHER" id="PTHR11061:SF49">
    <property type="entry name" value="23S RRNA (URACIL(1939)-C(5))-METHYLTRANSFERASE RLMD"/>
    <property type="match status" value="1"/>
</dbReference>
<dbReference type="PANTHER" id="PTHR11061">
    <property type="entry name" value="RNA M5U METHYLTRANSFERASE"/>
    <property type="match status" value="1"/>
</dbReference>
<dbReference type="Pfam" id="PF01938">
    <property type="entry name" value="TRAM"/>
    <property type="match status" value="1"/>
</dbReference>
<dbReference type="Pfam" id="PF05958">
    <property type="entry name" value="tRNA_U5-meth_tr"/>
    <property type="match status" value="1"/>
</dbReference>
<dbReference type="SUPFAM" id="SSF50249">
    <property type="entry name" value="Nucleic acid-binding proteins"/>
    <property type="match status" value="1"/>
</dbReference>
<dbReference type="SUPFAM" id="SSF53335">
    <property type="entry name" value="S-adenosyl-L-methionine-dependent methyltransferases"/>
    <property type="match status" value="1"/>
</dbReference>
<dbReference type="PROSITE" id="PS51687">
    <property type="entry name" value="SAM_MT_RNA_M5U"/>
    <property type="match status" value="1"/>
</dbReference>
<dbReference type="PROSITE" id="PS50926">
    <property type="entry name" value="TRAM"/>
    <property type="match status" value="1"/>
</dbReference>
<dbReference type="PROSITE" id="PS01230">
    <property type="entry name" value="TRMA_1"/>
    <property type="match status" value="1"/>
</dbReference>
<dbReference type="PROSITE" id="PS01231">
    <property type="entry name" value="TRMA_2"/>
    <property type="match status" value="1"/>
</dbReference>
<sequence length="449" mass="50925">MGRSRHHNKLKEGIFEAEITALSHDGRGIAKVDGKTTFIPFTLPGEVVKFEYTFTKAKFDEAKVVEYVKKSSNRVNPPCEHFQICGGCSLQHMSTDAQIEHKQQTLINQLKYIGNGVEPENILPPLRTSNTEGYRNKARLGVRYVSKKGKILVGFRERNGRFLADIDKCIVLNPLVGDKITEISSFIETLSIYQHIAQLEIAIDDTRPAMIVRHLEPFTNEDLEKLRSFAQQNNYWIYLQSKGPDTIFRLYPQGDVEPKKLSYQPAAGIDIGFEPNDFTQVNNDINKKMIKRAIELLDISENDSIIDLFCGLGNFTLPISQHAKTVIGVEGEPTMVKRAKETADNNNITNVNFYAANLFESFEDKEWFNNFEYNKMLLDPPRAGAQEVCNNIEKFNVKRIVYVSCDTATLARDAGILVNNKDYKLISAGVMDMFPHTMHVESIAVFEKI</sequence>
<protein>
    <recommendedName>
        <fullName evidence="1">23S rRNA (uracil(1939)-C(5))-methyltransferase RlmD</fullName>
        <ecNumber evidence="1">2.1.1.190</ecNumber>
    </recommendedName>
    <alternativeName>
        <fullName evidence="1">23S rRNA(m5U1939)-methyltransferase</fullName>
    </alternativeName>
</protein>
<name>RLMD_FRATN</name>
<reference key="1">
    <citation type="journal article" date="2007" name="Genome Biol.">
        <title>Comparison of Francisella tularensis genomes reveals evolutionary events associated with the emergence of human pathogenic strains.</title>
        <authorList>
            <person name="Rohmer L."/>
            <person name="Fong C."/>
            <person name="Abmayr S."/>
            <person name="Wasnick M."/>
            <person name="Larson Freeman T.J."/>
            <person name="Radey M."/>
            <person name="Guina T."/>
            <person name="Svensson K."/>
            <person name="Hayden H.S."/>
            <person name="Jacobs M."/>
            <person name="Gallagher L.A."/>
            <person name="Manoil C."/>
            <person name="Ernst R.K."/>
            <person name="Drees B."/>
            <person name="Buckley D."/>
            <person name="Haugen E."/>
            <person name="Bovee D."/>
            <person name="Zhou Y."/>
            <person name="Chang J."/>
            <person name="Levy R."/>
            <person name="Lim R."/>
            <person name="Gillett W."/>
            <person name="Guenthener D."/>
            <person name="Kang A."/>
            <person name="Shaffer S.A."/>
            <person name="Taylor G."/>
            <person name="Chen J."/>
            <person name="Gallis B."/>
            <person name="D'Argenio D.A."/>
            <person name="Forsman M."/>
            <person name="Olson M.V."/>
            <person name="Goodlett D.R."/>
            <person name="Kaul R."/>
            <person name="Miller S.I."/>
            <person name="Brittnacher M.J."/>
        </authorList>
    </citation>
    <scope>NUCLEOTIDE SEQUENCE [LARGE SCALE GENOMIC DNA]</scope>
    <source>
        <strain>U112</strain>
    </source>
</reference>
<keyword id="KW-0004">4Fe-4S</keyword>
<keyword id="KW-0408">Iron</keyword>
<keyword id="KW-0411">Iron-sulfur</keyword>
<keyword id="KW-0479">Metal-binding</keyword>
<keyword id="KW-0489">Methyltransferase</keyword>
<keyword id="KW-0698">rRNA processing</keyword>
<keyword id="KW-0949">S-adenosyl-L-methionine</keyword>
<keyword id="KW-0808">Transferase</keyword>
<accession>A0Q5J5</accession>
<evidence type="ECO:0000255" key="1">
    <source>
        <dbReference type="HAMAP-Rule" id="MF_01010"/>
    </source>
</evidence>
<feature type="chain" id="PRO_0000282043" description="23S rRNA (uracil(1939)-C(5))-methyltransferase RlmD">
    <location>
        <begin position="1"/>
        <end position="449"/>
    </location>
</feature>
<feature type="domain" description="TRAM" evidence="1">
    <location>
        <begin position="1"/>
        <end position="66"/>
    </location>
</feature>
<feature type="active site" description="Nucleophile" evidence="1">
    <location>
        <position position="405"/>
    </location>
</feature>
<feature type="binding site" evidence="1">
    <location>
        <position position="79"/>
    </location>
    <ligand>
        <name>[4Fe-4S] cluster</name>
        <dbReference type="ChEBI" id="CHEBI:49883"/>
    </ligand>
</feature>
<feature type="binding site" evidence="1">
    <location>
        <position position="85"/>
    </location>
    <ligand>
        <name>[4Fe-4S] cluster</name>
        <dbReference type="ChEBI" id="CHEBI:49883"/>
    </ligand>
</feature>
<feature type="binding site" evidence="1">
    <location>
        <position position="88"/>
    </location>
    <ligand>
        <name>[4Fe-4S] cluster</name>
        <dbReference type="ChEBI" id="CHEBI:49883"/>
    </ligand>
</feature>
<feature type="binding site" evidence="1">
    <location>
        <position position="169"/>
    </location>
    <ligand>
        <name>[4Fe-4S] cluster</name>
        <dbReference type="ChEBI" id="CHEBI:49883"/>
    </ligand>
</feature>
<feature type="binding site" evidence="1">
    <location>
        <position position="280"/>
    </location>
    <ligand>
        <name>S-adenosyl-L-methionine</name>
        <dbReference type="ChEBI" id="CHEBI:59789"/>
    </ligand>
</feature>
<feature type="binding site" evidence="1">
    <location>
        <position position="309"/>
    </location>
    <ligand>
        <name>S-adenosyl-L-methionine</name>
        <dbReference type="ChEBI" id="CHEBI:59789"/>
    </ligand>
</feature>
<feature type="binding site" evidence="1">
    <location>
        <position position="314"/>
    </location>
    <ligand>
        <name>S-adenosyl-L-methionine</name>
        <dbReference type="ChEBI" id="CHEBI:59789"/>
    </ligand>
</feature>
<feature type="binding site" evidence="1">
    <location>
        <position position="330"/>
    </location>
    <ligand>
        <name>S-adenosyl-L-methionine</name>
        <dbReference type="ChEBI" id="CHEBI:59789"/>
    </ligand>
</feature>
<feature type="binding site" evidence="1">
    <location>
        <position position="357"/>
    </location>
    <ligand>
        <name>S-adenosyl-L-methionine</name>
        <dbReference type="ChEBI" id="CHEBI:59789"/>
    </ligand>
</feature>
<feature type="binding site" evidence="1">
    <location>
        <position position="379"/>
    </location>
    <ligand>
        <name>S-adenosyl-L-methionine</name>
        <dbReference type="ChEBI" id="CHEBI:59789"/>
    </ligand>
</feature>
<comment type="function">
    <text evidence="1">Catalyzes the formation of 5-methyl-uridine at position 1939 (m5U1939) in 23S rRNA.</text>
</comment>
<comment type="catalytic activity">
    <reaction evidence="1">
        <text>uridine(1939) in 23S rRNA + S-adenosyl-L-methionine = 5-methyluridine(1939) in 23S rRNA + S-adenosyl-L-homocysteine + H(+)</text>
        <dbReference type="Rhea" id="RHEA:42908"/>
        <dbReference type="Rhea" id="RHEA-COMP:10278"/>
        <dbReference type="Rhea" id="RHEA-COMP:10279"/>
        <dbReference type="ChEBI" id="CHEBI:15378"/>
        <dbReference type="ChEBI" id="CHEBI:57856"/>
        <dbReference type="ChEBI" id="CHEBI:59789"/>
        <dbReference type="ChEBI" id="CHEBI:65315"/>
        <dbReference type="ChEBI" id="CHEBI:74447"/>
        <dbReference type="EC" id="2.1.1.190"/>
    </reaction>
</comment>
<comment type="similarity">
    <text evidence="1">Belongs to the class I-like SAM-binding methyltransferase superfamily. RNA M5U methyltransferase family. RlmD subfamily.</text>
</comment>
<gene>
    <name evidence="1" type="primary">rlmD</name>
    <name type="synonym">rumA</name>
    <name type="ordered locus">FTN_0616</name>
</gene>
<organism>
    <name type="scientific">Francisella tularensis subsp. novicida (strain U112)</name>
    <dbReference type="NCBI Taxonomy" id="401614"/>
    <lineage>
        <taxon>Bacteria</taxon>
        <taxon>Pseudomonadati</taxon>
        <taxon>Pseudomonadota</taxon>
        <taxon>Gammaproteobacteria</taxon>
        <taxon>Thiotrichales</taxon>
        <taxon>Francisellaceae</taxon>
        <taxon>Francisella</taxon>
    </lineage>
</organism>
<proteinExistence type="inferred from homology"/>